<protein>
    <recommendedName>
        <fullName>NAD(P)H-quinone oxidoreductase subunit 6, chloroplastic</fullName>
        <ecNumber>7.1.1.-</ecNumber>
    </recommendedName>
    <alternativeName>
        <fullName>NAD(P)H dehydrogenase subunit 6</fullName>
    </alternativeName>
    <alternativeName>
        <fullName>NADH-plastoquinone oxidoreductase subunit 6</fullName>
    </alternativeName>
</protein>
<proteinExistence type="inferred from homology"/>
<name>NU6C_CERDE</name>
<comment type="function">
    <text evidence="1">NDH shuttles electrons from NAD(P)H:plastoquinone, via FMN and iron-sulfur (Fe-S) centers, to quinones in the photosynthetic chain and possibly in a chloroplast respiratory chain. The immediate electron acceptor for the enzyme in this species is believed to be plastoquinone. Couples the redox reaction to proton translocation, and thus conserves the redox energy in a proton gradient (By similarity).</text>
</comment>
<comment type="catalytic activity">
    <reaction>
        <text>a plastoquinone + NADH + (n+1) H(+)(in) = a plastoquinol + NAD(+) + n H(+)(out)</text>
        <dbReference type="Rhea" id="RHEA:42608"/>
        <dbReference type="Rhea" id="RHEA-COMP:9561"/>
        <dbReference type="Rhea" id="RHEA-COMP:9562"/>
        <dbReference type="ChEBI" id="CHEBI:15378"/>
        <dbReference type="ChEBI" id="CHEBI:17757"/>
        <dbReference type="ChEBI" id="CHEBI:57540"/>
        <dbReference type="ChEBI" id="CHEBI:57945"/>
        <dbReference type="ChEBI" id="CHEBI:62192"/>
    </reaction>
</comment>
<comment type="catalytic activity">
    <reaction>
        <text>a plastoquinone + NADPH + (n+1) H(+)(in) = a plastoquinol + NADP(+) + n H(+)(out)</text>
        <dbReference type="Rhea" id="RHEA:42612"/>
        <dbReference type="Rhea" id="RHEA-COMP:9561"/>
        <dbReference type="Rhea" id="RHEA-COMP:9562"/>
        <dbReference type="ChEBI" id="CHEBI:15378"/>
        <dbReference type="ChEBI" id="CHEBI:17757"/>
        <dbReference type="ChEBI" id="CHEBI:57783"/>
        <dbReference type="ChEBI" id="CHEBI:58349"/>
        <dbReference type="ChEBI" id="CHEBI:62192"/>
    </reaction>
</comment>
<comment type="subunit">
    <text evidence="1">NDH is composed of at least 16 different subunits, 5 of which are encoded in the nucleus.</text>
</comment>
<comment type="subcellular location">
    <subcellularLocation>
        <location evidence="1">Plastid</location>
        <location evidence="1">Chloroplast thylakoid membrane</location>
        <topology evidence="1">Multi-pass membrane protein</topology>
    </subcellularLocation>
</comment>
<comment type="similarity">
    <text evidence="3">Belongs to the complex I subunit 6 family.</text>
</comment>
<gene>
    <name type="primary">ndhG</name>
</gene>
<organism>
    <name type="scientific">Ceratophyllum demersum</name>
    <name type="common">Rigid hornwort</name>
    <name type="synonym">Coontail</name>
    <dbReference type="NCBI Taxonomy" id="4428"/>
    <lineage>
        <taxon>Eukaryota</taxon>
        <taxon>Viridiplantae</taxon>
        <taxon>Streptophyta</taxon>
        <taxon>Embryophyta</taxon>
        <taxon>Tracheophyta</taxon>
        <taxon>Spermatophyta</taxon>
        <taxon>Magnoliopsida</taxon>
        <taxon>Ceratophyllales</taxon>
        <taxon>Ceratophyllaceae</taxon>
        <taxon>Ceratophyllum</taxon>
    </lineage>
</organism>
<dbReference type="EC" id="7.1.1.-"/>
<dbReference type="EMBL" id="EF614270">
    <property type="protein sequence ID" value="ABQ81504.1"/>
    <property type="molecule type" value="Genomic_DNA"/>
</dbReference>
<dbReference type="RefSeq" id="YP_001542500.1">
    <property type="nucleotide sequence ID" value="NC_009962.1"/>
</dbReference>
<dbReference type="SMR" id="A8SEF8"/>
<dbReference type="GeneID" id="5729482"/>
<dbReference type="GO" id="GO:0009535">
    <property type="term" value="C:chloroplast thylakoid membrane"/>
    <property type="evidence" value="ECO:0007669"/>
    <property type="project" value="UniProtKB-SubCell"/>
</dbReference>
<dbReference type="GO" id="GO:0008137">
    <property type="term" value="F:NADH dehydrogenase (ubiquinone) activity"/>
    <property type="evidence" value="ECO:0007669"/>
    <property type="project" value="InterPro"/>
</dbReference>
<dbReference type="GO" id="GO:0048038">
    <property type="term" value="F:quinone binding"/>
    <property type="evidence" value="ECO:0007669"/>
    <property type="project" value="UniProtKB-KW"/>
</dbReference>
<dbReference type="FunFam" id="1.20.120.1200:FF:000002">
    <property type="entry name" value="NAD(P)H-quinone oxidoreductase subunit 6, chloroplastic"/>
    <property type="match status" value="1"/>
</dbReference>
<dbReference type="Gene3D" id="1.20.120.1200">
    <property type="entry name" value="NADH-ubiquinone/plastoquinone oxidoreductase chain 6, subunit NuoJ"/>
    <property type="match status" value="1"/>
</dbReference>
<dbReference type="InterPro" id="IPR050290">
    <property type="entry name" value="NAD(P)H-Q_Oxidoreduct_6"/>
</dbReference>
<dbReference type="InterPro" id="IPR001457">
    <property type="entry name" value="NADH_UbQ/plastoQ_OxRdtase_su6"/>
</dbReference>
<dbReference type="InterPro" id="IPR042106">
    <property type="entry name" value="Nuo/plastoQ_OxRdtase_6_NuoJ"/>
</dbReference>
<dbReference type="PANTHER" id="PTHR48479">
    <property type="entry name" value="NAD(P)H-QUINONE OXIDOREDUCTASE SUBUNIT 6, CHLOROPLASTIC"/>
    <property type="match status" value="1"/>
</dbReference>
<dbReference type="PANTHER" id="PTHR48479:SF1">
    <property type="entry name" value="NAD(P)H-QUINONE OXIDOREDUCTASE SUBUNIT 6, CHLOROPLASTIC"/>
    <property type="match status" value="1"/>
</dbReference>
<dbReference type="Pfam" id="PF00499">
    <property type="entry name" value="Oxidored_q3"/>
    <property type="match status" value="1"/>
</dbReference>
<sequence>MDLPGPIHDILLVFLGSGLILGGLGVVLFTTPIYSAFSLGLVFVCISLFYIPSNSYFVAAAQLLIYVGAVNVLIVFAVMFMNGSEYYKDFHLWTVGDGITSLVCTSILFSLITTILETSWYGIIWTTRSNQIIEQDLTSNVQQMGIHLSTDFYLPFELTSIILLVALIGAIAMARQ</sequence>
<reference key="1">
    <citation type="journal article" date="2007" name="Proc. Natl. Acad. Sci. U.S.A.">
        <title>Using plastid genome-scale data to resolve enigmatic relationships among basal angiosperms.</title>
        <authorList>
            <person name="Moore M.J."/>
            <person name="Bell C.D."/>
            <person name="Soltis P.S."/>
            <person name="Soltis D.E."/>
        </authorList>
    </citation>
    <scope>NUCLEOTIDE SEQUENCE [LARGE SCALE GENOMIC DNA]</scope>
</reference>
<geneLocation type="chloroplast"/>
<evidence type="ECO:0000250" key="1"/>
<evidence type="ECO:0000255" key="2"/>
<evidence type="ECO:0000305" key="3"/>
<keyword id="KW-0150">Chloroplast</keyword>
<keyword id="KW-0472">Membrane</keyword>
<keyword id="KW-0520">NAD</keyword>
<keyword id="KW-0521">NADP</keyword>
<keyword id="KW-0934">Plastid</keyword>
<keyword id="KW-0618">Plastoquinone</keyword>
<keyword id="KW-0874">Quinone</keyword>
<keyword id="KW-0793">Thylakoid</keyword>
<keyword id="KW-1278">Translocase</keyword>
<keyword id="KW-0812">Transmembrane</keyword>
<keyword id="KW-1133">Transmembrane helix</keyword>
<keyword id="KW-0813">Transport</keyword>
<feature type="chain" id="PRO_0000360236" description="NAD(P)H-quinone oxidoreductase subunit 6, chloroplastic">
    <location>
        <begin position="1"/>
        <end position="176"/>
    </location>
</feature>
<feature type="transmembrane region" description="Helical" evidence="2">
    <location>
        <begin position="10"/>
        <end position="30"/>
    </location>
</feature>
<feature type="transmembrane region" description="Helical" evidence="2">
    <location>
        <begin position="32"/>
        <end position="52"/>
    </location>
</feature>
<feature type="transmembrane region" description="Helical" evidence="2">
    <location>
        <begin position="61"/>
        <end position="81"/>
    </location>
</feature>
<feature type="transmembrane region" description="Helical" evidence="2">
    <location>
        <begin position="90"/>
        <end position="112"/>
    </location>
</feature>
<feature type="transmembrane region" description="Helical" evidence="2">
    <location>
        <begin position="152"/>
        <end position="172"/>
    </location>
</feature>
<accession>A8SEF8</accession>